<reference key="1">
    <citation type="submission" date="2007-05" db="EMBL/GenBank/DDBJ databases">
        <title>Complete sequence of Dehalococcoides sp. BAV1.</title>
        <authorList>
            <consortium name="US DOE Joint Genome Institute"/>
            <person name="Copeland A."/>
            <person name="Lucas S."/>
            <person name="Lapidus A."/>
            <person name="Barry K."/>
            <person name="Detter J.C."/>
            <person name="Glavina del Rio T."/>
            <person name="Hammon N."/>
            <person name="Israni S."/>
            <person name="Pitluck S."/>
            <person name="Lowry S."/>
            <person name="Clum A."/>
            <person name="Schmutz J."/>
            <person name="Larimer F."/>
            <person name="Land M."/>
            <person name="Hauser L."/>
            <person name="Kyrpides N."/>
            <person name="Kim E."/>
            <person name="Ritalahti K.M."/>
            <person name="Loeffler F."/>
            <person name="Richardson P."/>
        </authorList>
    </citation>
    <scope>NUCLEOTIDE SEQUENCE [LARGE SCALE GENOMIC DNA]</scope>
    <source>
        <strain>ATCC BAA-2100 / JCM 16839 / KCTC 5957 / BAV1</strain>
    </source>
</reference>
<dbReference type="EMBL" id="CP000688">
    <property type="protein sequence ID" value="ABQ17469.1"/>
    <property type="molecule type" value="Genomic_DNA"/>
</dbReference>
<dbReference type="SMR" id="A5FQQ4"/>
<dbReference type="KEGG" id="deb:DehaBAV1_0887"/>
<dbReference type="PATRIC" id="fig|216389.18.peg.937"/>
<dbReference type="HOGENOM" id="CLU_190949_0_2_0"/>
<dbReference type="GO" id="GO:0005737">
    <property type="term" value="C:cytoplasm"/>
    <property type="evidence" value="ECO:0007669"/>
    <property type="project" value="UniProtKB-ARBA"/>
</dbReference>
<dbReference type="GO" id="GO:1990904">
    <property type="term" value="C:ribonucleoprotein complex"/>
    <property type="evidence" value="ECO:0007669"/>
    <property type="project" value="UniProtKB-KW"/>
</dbReference>
<dbReference type="GO" id="GO:0005840">
    <property type="term" value="C:ribosome"/>
    <property type="evidence" value="ECO:0007669"/>
    <property type="project" value="UniProtKB-KW"/>
</dbReference>
<dbReference type="GO" id="GO:0003735">
    <property type="term" value="F:structural constituent of ribosome"/>
    <property type="evidence" value="ECO:0007669"/>
    <property type="project" value="InterPro"/>
</dbReference>
<dbReference type="GO" id="GO:0006412">
    <property type="term" value="P:translation"/>
    <property type="evidence" value="ECO:0007669"/>
    <property type="project" value="UniProtKB-UniRule"/>
</dbReference>
<dbReference type="Gene3D" id="2.20.28.120">
    <property type="entry name" value="Ribosomal protein L33"/>
    <property type="match status" value="1"/>
</dbReference>
<dbReference type="HAMAP" id="MF_00294">
    <property type="entry name" value="Ribosomal_bL33"/>
    <property type="match status" value="1"/>
</dbReference>
<dbReference type="InterPro" id="IPR001705">
    <property type="entry name" value="Ribosomal_bL33"/>
</dbReference>
<dbReference type="InterPro" id="IPR018264">
    <property type="entry name" value="Ribosomal_bL33_CS"/>
</dbReference>
<dbReference type="InterPro" id="IPR038584">
    <property type="entry name" value="Ribosomal_bL33_sf"/>
</dbReference>
<dbReference type="InterPro" id="IPR011332">
    <property type="entry name" value="Ribosomal_zn-bd"/>
</dbReference>
<dbReference type="NCBIfam" id="NF001764">
    <property type="entry name" value="PRK00504.1"/>
    <property type="match status" value="1"/>
</dbReference>
<dbReference type="NCBIfam" id="NF001860">
    <property type="entry name" value="PRK00595.1"/>
    <property type="match status" value="1"/>
</dbReference>
<dbReference type="NCBIfam" id="TIGR01023">
    <property type="entry name" value="rpmG_bact"/>
    <property type="match status" value="1"/>
</dbReference>
<dbReference type="PANTHER" id="PTHR43168">
    <property type="entry name" value="50S RIBOSOMAL PROTEIN L33, CHLOROPLASTIC"/>
    <property type="match status" value="1"/>
</dbReference>
<dbReference type="PANTHER" id="PTHR43168:SF2">
    <property type="entry name" value="LARGE RIBOSOMAL SUBUNIT PROTEIN BL33C"/>
    <property type="match status" value="1"/>
</dbReference>
<dbReference type="Pfam" id="PF00471">
    <property type="entry name" value="Ribosomal_L33"/>
    <property type="match status" value="1"/>
</dbReference>
<dbReference type="SUPFAM" id="SSF57829">
    <property type="entry name" value="Zn-binding ribosomal proteins"/>
    <property type="match status" value="1"/>
</dbReference>
<dbReference type="PROSITE" id="PS00582">
    <property type="entry name" value="RIBOSOMAL_L33"/>
    <property type="match status" value="1"/>
</dbReference>
<accession>A5FQQ4</accession>
<keyword id="KW-0687">Ribonucleoprotein</keyword>
<keyword id="KW-0689">Ribosomal protein</keyword>
<feature type="chain" id="PRO_0000356445" description="Large ribosomal subunit protein bL33">
    <location>
        <begin position="1"/>
        <end position="55"/>
    </location>
</feature>
<organism>
    <name type="scientific">Dehalococcoides mccartyi (strain ATCC BAA-2100 / JCM 16839 / KCTC 5957 / BAV1)</name>
    <dbReference type="NCBI Taxonomy" id="216389"/>
    <lineage>
        <taxon>Bacteria</taxon>
        <taxon>Bacillati</taxon>
        <taxon>Chloroflexota</taxon>
        <taxon>Dehalococcoidia</taxon>
        <taxon>Dehalococcoidales</taxon>
        <taxon>Dehalococcoidaceae</taxon>
        <taxon>Dehalococcoides</taxon>
    </lineage>
</organism>
<sequence length="55" mass="6560">MAKKTDTRIVINMACTDCGERNYTTEKNKRNDPRRIELSKYCPRCREAKVHRETK</sequence>
<evidence type="ECO:0000255" key="1">
    <source>
        <dbReference type="HAMAP-Rule" id="MF_00294"/>
    </source>
</evidence>
<evidence type="ECO:0000305" key="2"/>
<comment type="similarity">
    <text evidence="1">Belongs to the bacterial ribosomal protein bL33 family.</text>
</comment>
<proteinExistence type="inferred from homology"/>
<name>RL33_DEHMB</name>
<gene>
    <name evidence="1" type="primary">rpmG</name>
    <name type="ordered locus">DehaBAV1_0887</name>
</gene>
<protein>
    <recommendedName>
        <fullName evidence="1">Large ribosomal subunit protein bL33</fullName>
    </recommendedName>
    <alternativeName>
        <fullName evidence="2">50S ribosomal protein L33</fullName>
    </alternativeName>
</protein>